<reference key="1">
    <citation type="journal article" date="2002" name="Lancet">
        <title>Genome and virulence determinants of high virulence community-acquired MRSA.</title>
        <authorList>
            <person name="Baba T."/>
            <person name="Takeuchi F."/>
            <person name="Kuroda M."/>
            <person name="Yuzawa H."/>
            <person name="Aoki K."/>
            <person name="Oguchi A."/>
            <person name="Nagai Y."/>
            <person name="Iwama N."/>
            <person name="Asano K."/>
            <person name="Naimi T."/>
            <person name="Kuroda H."/>
            <person name="Cui L."/>
            <person name="Yamamoto K."/>
            <person name="Hiramatsu K."/>
        </authorList>
    </citation>
    <scope>NUCLEOTIDE SEQUENCE [LARGE SCALE GENOMIC DNA]</scope>
    <source>
        <strain>MW2</strain>
    </source>
</reference>
<accession>Q7A029</accession>
<sequence>MKIVIADDHAVVRTGFSMILNYQNDMEVVATAADGVEAYQKVMEYKPDVLLMDLSMPPGESGLIATSKIADSFPETKILILTMFDDEEYLFHVLRNGAKGYILKNAPDEQLLLAIRTVYKGETYVDMKLTTSLVNEFVSNSNQDTANTTDPFKILSKRELEILPLIAKGYGNKEIAEKLFVSVKTVEAHKTHIMTKLGLKSKPELVEYALKKKLLEF</sequence>
<name>NREC_STAAW</name>
<evidence type="ECO:0000250" key="1"/>
<evidence type="ECO:0000255" key="2">
    <source>
        <dbReference type="PROSITE-ProRule" id="PRU00169"/>
    </source>
</evidence>
<evidence type="ECO:0000255" key="3">
    <source>
        <dbReference type="PROSITE-ProRule" id="PRU00411"/>
    </source>
</evidence>
<evidence type="ECO:0000305" key="4"/>
<keyword id="KW-0010">Activator</keyword>
<keyword id="KW-0963">Cytoplasm</keyword>
<keyword id="KW-0238">DNA-binding</keyword>
<keyword id="KW-0597">Phosphoprotein</keyword>
<keyword id="KW-0804">Transcription</keyword>
<keyword id="KW-0805">Transcription regulation</keyword>
<keyword id="KW-0902">Two-component regulatory system</keyword>
<feature type="chain" id="PRO_0000349350" description="Oxygen regulatory protein NreC">
    <location>
        <begin position="1"/>
        <end position="217"/>
    </location>
</feature>
<feature type="domain" description="Response regulatory" evidence="2">
    <location>
        <begin position="2"/>
        <end position="119"/>
    </location>
</feature>
<feature type="domain" description="HTH luxR-type" evidence="3">
    <location>
        <begin position="148"/>
        <end position="213"/>
    </location>
</feature>
<feature type="DNA-binding region" description="H-T-H motif" evidence="3">
    <location>
        <begin position="172"/>
        <end position="191"/>
    </location>
</feature>
<feature type="modified residue" description="4-aspartylphosphate" evidence="2">
    <location>
        <position position="53"/>
    </location>
</feature>
<gene>
    <name type="primary">nreC</name>
    <name type="ordered locus">MW2313</name>
</gene>
<comment type="function">
    <text evidence="1">Member of the two-component regulatory system NreB/NreC involved in the control of dissimilatory nitrate/nitrite reduction in response to oxygen. Phosphorylated NreC binds to a GC-rich palindromic sequence at the promoters of the nitrate (narGHJI) and nitrite (nir) reductase operons, as well as the putative nitrate transporter gene narT, and activates their expression (By similarity).</text>
</comment>
<comment type="subcellular location">
    <subcellularLocation>
        <location evidence="4">Cytoplasm</location>
    </subcellularLocation>
</comment>
<comment type="PTM">
    <text evidence="1">Phosphorylated by NreB.</text>
</comment>
<proteinExistence type="inferred from homology"/>
<organism>
    <name type="scientific">Staphylococcus aureus (strain MW2)</name>
    <dbReference type="NCBI Taxonomy" id="196620"/>
    <lineage>
        <taxon>Bacteria</taxon>
        <taxon>Bacillati</taxon>
        <taxon>Bacillota</taxon>
        <taxon>Bacilli</taxon>
        <taxon>Bacillales</taxon>
        <taxon>Staphylococcaceae</taxon>
        <taxon>Staphylococcus</taxon>
    </lineage>
</organism>
<dbReference type="EMBL" id="BA000033">
    <property type="protein sequence ID" value="BAB96178.1"/>
    <property type="molecule type" value="Genomic_DNA"/>
</dbReference>
<dbReference type="RefSeq" id="WP_000706315.1">
    <property type="nucleotide sequence ID" value="NC_003923.1"/>
</dbReference>
<dbReference type="SMR" id="Q7A029"/>
<dbReference type="KEGG" id="sam:MW2313"/>
<dbReference type="HOGENOM" id="CLU_000445_90_1_9"/>
<dbReference type="GO" id="GO:0005737">
    <property type="term" value="C:cytoplasm"/>
    <property type="evidence" value="ECO:0007669"/>
    <property type="project" value="UniProtKB-SubCell"/>
</dbReference>
<dbReference type="GO" id="GO:0003677">
    <property type="term" value="F:DNA binding"/>
    <property type="evidence" value="ECO:0007669"/>
    <property type="project" value="UniProtKB-KW"/>
</dbReference>
<dbReference type="GO" id="GO:0000160">
    <property type="term" value="P:phosphorelay signal transduction system"/>
    <property type="evidence" value="ECO:0007669"/>
    <property type="project" value="UniProtKB-KW"/>
</dbReference>
<dbReference type="GO" id="GO:0006355">
    <property type="term" value="P:regulation of DNA-templated transcription"/>
    <property type="evidence" value="ECO:0007669"/>
    <property type="project" value="InterPro"/>
</dbReference>
<dbReference type="CDD" id="cd06170">
    <property type="entry name" value="LuxR_C_like"/>
    <property type="match status" value="1"/>
</dbReference>
<dbReference type="CDD" id="cd17535">
    <property type="entry name" value="REC_NarL-like"/>
    <property type="match status" value="1"/>
</dbReference>
<dbReference type="Gene3D" id="3.40.50.2300">
    <property type="match status" value="1"/>
</dbReference>
<dbReference type="InterPro" id="IPR011006">
    <property type="entry name" value="CheY-like_superfamily"/>
</dbReference>
<dbReference type="InterPro" id="IPR016032">
    <property type="entry name" value="Sig_transdc_resp-reg_C-effctor"/>
</dbReference>
<dbReference type="InterPro" id="IPR001789">
    <property type="entry name" value="Sig_transdc_resp-reg_receiver"/>
</dbReference>
<dbReference type="InterPro" id="IPR000792">
    <property type="entry name" value="Tscrpt_reg_LuxR_C"/>
</dbReference>
<dbReference type="InterPro" id="IPR039420">
    <property type="entry name" value="WalR-like"/>
</dbReference>
<dbReference type="PANTHER" id="PTHR43214:SF37">
    <property type="entry name" value="TRANSCRIPTIONAL REGULATORY PROTEIN YDFI"/>
    <property type="match status" value="1"/>
</dbReference>
<dbReference type="PANTHER" id="PTHR43214">
    <property type="entry name" value="TWO-COMPONENT RESPONSE REGULATOR"/>
    <property type="match status" value="1"/>
</dbReference>
<dbReference type="Pfam" id="PF00196">
    <property type="entry name" value="GerE"/>
    <property type="match status" value="1"/>
</dbReference>
<dbReference type="Pfam" id="PF00072">
    <property type="entry name" value="Response_reg"/>
    <property type="match status" value="1"/>
</dbReference>
<dbReference type="PRINTS" id="PR00038">
    <property type="entry name" value="HTHLUXR"/>
</dbReference>
<dbReference type="SMART" id="SM00421">
    <property type="entry name" value="HTH_LUXR"/>
    <property type="match status" value="1"/>
</dbReference>
<dbReference type="SMART" id="SM00448">
    <property type="entry name" value="REC"/>
    <property type="match status" value="1"/>
</dbReference>
<dbReference type="SUPFAM" id="SSF46894">
    <property type="entry name" value="C-terminal effector domain of the bipartite response regulators"/>
    <property type="match status" value="1"/>
</dbReference>
<dbReference type="SUPFAM" id="SSF52172">
    <property type="entry name" value="CheY-like"/>
    <property type="match status" value="1"/>
</dbReference>
<dbReference type="PROSITE" id="PS00622">
    <property type="entry name" value="HTH_LUXR_1"/>
    <property type="match status" value="1"/>
</dbReference>
<dbReference type="PROSITE" id="PS50043">
    <property type="entry name" value="HTH_LUXR_2"/>
    <property type="match status" value="1"/>
</dbReference>
<dbReference type="PROSITE" id="PS50110">
    <property type="entry name" value="RESPONSE_REGULATORY"/>
    <property type="match status" value="1"/>
</dbReference>
<protein>
    <recommendedName>
        <fullName>Oxygen regulatory protein NreC</fullName>
    </recommendedName>
    <alternativeName>
        <fullName>Nitrogen regulation protein C</fullName>
    </alternativeName>
</protein>